<reference key="1">
    <citation type="submission" date="2008-06" db="EMBL/GenBank/DDBJ databases">
        <title>Complete sequence of Stenotrophomonas maltophilia R551-3.</title>
        <authorList>
            <consortium name="US DOE Joint Genome Institute"/>
            <person name="Lucas S."/>
            <person name="Copeland A."/>
            <person name="Lapidus A."/>
            <person name="Glavina del Rio T."/>
            <person name="Dalin E."/>
            <person name="Tice H."/>
            <person name="Pitluck S."/>
            <person name="Chain P."/>
            <person name="Malfatti S."/>
            <person name="Shin M."/>
            <person name="Vergez L."/>
            <person name="Lang D."/>
            <person name="Schmutz J."/>
            <person name="Larimer F."/>
            <person name="Land M."/>
            <person name="Hauser L."/>
            <person name="Kyrpides N."/>
            <person name="Mikhailova N."/>
            <person name="Taghavi S."/>
            <person name="Monchy S."/>
            <person name="Newman L."/>
            <person name="Vangronsveld J."/>
            <person name="van der Lelie D."/>
            <person name="Richardson P."/>
        </authorList>
    </citation>
    <scope>NUCLEOTIDE SEQUENCE [LARGE SCALE GENOMIC DNA]</scope>
    <source>
        <strain>R551-3</strain>
    </source>
</reference>
<comment type="function">
    <text evidence="1">Catalyzes the attachment of glutamate to tRNA(Glu) in a two-step reaction: glutamate is first activated by ATP to form Glu-AMP and then transferred to the acceptor end of tRNA(Glu).</text>
</comment>
<comment type="catalytic activity">
    <reaction evidence="1">
        <text>tRNA(Glu) + L-glutamate + ATP = L-glutamyl-tRNA(Glu) + AMP + diphosphate</text>
        <dbReference type="Rhea" id="RHEA:23540"/>
        <dbReference type="Rhea" id="RHEA-COMP:9663"/>
        <dbReference type="Rhea" id="RHEA-COMP:9680"/>
        <dbReference type="ChEBI" id="CHEBI:29985"/>
        <dbReference type="ChEBI" id="CHEBI:30616"/>
        <dbReference type="ChEBI" id="CHEBI:33019"/>
        <dbReference type="ChEBI" id="CHEBI:78442"/>
        <dbReference type="ChEBI" id="CHEBI:78520"/>
        <dbReference type="ChEBI" id="CHEBI:456215"/>
        <dbReference type="EC" id="6.1.1.17"/>
    </reaction>
</comment>
<comment type="subunit">
    <text evidence="1">Monomer.</text>
</comment>
<comment type="subcellular location">
    <subcellularLocation>
        <location evidence="1">Cytoplasm</location>
    </subcellularLocation>
</comment>
<comment type="similarity">
    <text evidence="1">Belongs to the class-I aminoacyl-tRNA synthetase family. Glutamate--tRNA ligase type 1 subfamily.</text>
</comment>
<name>SYE_STRM5</name>
<dbReference type="EC" id="6.1.1.17" evidence="1"/>
<dbReference type="EMBL" id="CP001111">
    <property type="protein sequence ID" value="ACF50914.1"/>
    <property type="molecule type" value="Genomic_DNA"/>
</dbReference>
<dbReference type="RefSeq" id="WP_012510481.1">
    <property type="nucleotide sequence ID" value="NC_011071.1"/>
</dbReference>
<dbReference type="SMR" id="B4SPM7"/>
<dbReference type="STRING" id="391008.Smal_1209"/>
<dbReference type="KEGG" id="smt:Smal_1209"/>
<dbReference type="eggNOG" id="COG0008">
    <property type="taxonomic scope" value="Bacteria"/>
</dbReference>
<dbReference type="HOGENOM" id="CLU_015768_6_0_6"/>
<dbReference type="OrthoDB" id="9807503at2"/>
<dbReference type="Proteomes" id="UP000001867">
    <property type="component" value="Chromosome"/>
</dbReference>
<dbReference type="GO" id="GO:0005829">
    <property type="term" value="C:cytosol"/>
    <property type="evidence" value="ECO:0007669"/>
    <property type="project" value="TreeGrafter"/>
</dbReference>
<dbReference type="GO" id="GO:0005524">
    <property type="term" value="F:ATP binding"/>
    <property type="evidence" value="ECO:0007669"/>
    <property type="project" value="UniProtKB-UniRule"/>
</dbReference>
<dbReference type="GO" id="GO:0004818">
    <property type="term" value="F:glutamate-tRNA ligase activity"/>
    <property type="evidence" value="ECO:0007669"/>
    <property type="project" value="UniProtKB-UniRule"/>
</dbReference>
<dbReference type="GO" id="GO:0000049">
    <property type="term" value="F:tRNA binding"/>
    <property type="evidence" value="ECO:0007669"/>
    <property type="project" value="InterPro"/>
</dbReference>
<dbReference type="GO" id="GO:0008270">
    <property type="term" value="F:zinc ion binding"/>
    <property type="evidence" value="ECO:0007669"/>
    <property type="project" value="InterPro"/>
</dbReference>
<dbReference type="GO" id="GO:0006424">
    <property type="term" value="P:glutamyl-tRNA aminoacylation"/>
    <property type="evidence" value="ECO:0007669"/>
    <property type="project" value="UniProtKB-UniRule"/>
</dbReference>
<dbReference type="CDD" id="cd00808">
    <property type="entry name" value="GluRS_core"/>
    <property type="match status" value="1"/>
</dbReference>
<dbReference type="FunFam" id="3.40.50.620:FF:000007">
    <property type="entry name" value="Glutamate--tRNA ligase"/>
    <property type="match status" value="1"/>
</dbReference>
<dbReference type="Gene3D" id="1.10.10.350">
    <property type="match status" value="1"/>
</dbReference>
<dbReference type="Gene3D" id="3.40.50.620">
    <property type="entry name" value="HUPs"/>
    <property type="match status" value="1"/>
</dbReference>
<dbReference type="HAMAP" id="MF_00022">
    <property type="entry name" value="Glu_tRNA_synth_type1"/>
    <property type="match status" value="1"/>
</dbReference>
<dbReference type="InterPro" id="IPR045462">
    <property type="entry name" value="aa-tRNA-synth_I_cd-bd"/>
</dbReference>
<dbReference type="InterPro" id="IPR020751">
    <property type="entry name" value="aa-tRNA-synth_I_codon-bd_sub2"/>
</dbReference>
<dbReference type="InterPro" id="IPR001412">
    <property type="entry name" value="aa-tRNA-synth_I_CS"/>
</dbReference>
<dbReference type="InterPro" id="IPR008925">
    <property type="entry name" value="aa_tRNA-synth_I_cd-bd_sf"/>
</dbReference>
<dbReference type="InterPro" id="IPR004527">
    <property type="entry name" value="Glu-tRNA-ligase_bac/mito"/>
</dbReference>
<dbReference type="InterPro" id="IPR000924">
    <property type="entry name" value="Glu/Gln-tRNA-synth"/>
</dbReference>
<dbReference type="InterPro" id="IPR020058">
    <property type="entry name" value="Glu/Gln-tRNA-synth_Ib_cat-dom"/>
</dbReference>
<dbReference type="InterPro" id="IPR049940">
    <property type="entry name" value="GluQ/Sye"/>
</dbReference>
<dbReference type="InterPro" id="IPR033910">
    <property type="entry name" value="GluRS_core"/>
</dbReference>
<dbReference type="InterPro" id="IPR014729">
    <property type="entry name" value="Rossmann-like_a/b/a_fold"/>
</dbReference>
<dbReference type="NCBIfam" id="TIGR00464">
    <property type="entry name" value="gltX_bact"/>
    <property type="match status" value="1"/>
</dbReference>
<dbReference type="PANTHER" id="PTHR43311">
    <property type="entry name" value="GLUTAMATE--TRNA LIGASE"/>
    <property type="match status" value="1"/>
</dbReference>
<dbReference type="PANTHER" id="PTHR43311:SF2">
    <property type="entry name" value="GLUTAMATE--TRNA LIGASE, MITOCHONDRIAL-RELATED"/>
    <property type="match status" value="1"/>
</dbReference>
<dbReference type="Pfam" id="PF19269">
    <property type="entry name" value="Anticodon_2"/>
    <property type="match status" value="1"/>
</dbReference>
<dbReference type="Pfam" id="PF00749">
    <property type="entry name" value="tRNA-synt_1c"/>
    <property type="match status" value="1"/>
</dbReference>
<dbReference type="PRINTS" id="PR00987">
    <property type="entry name" value="TRNASYNTHGLU"/>
</dbReference>
<dbReference type="SUPFAM" id="SSF48163">
    <property type="entry name" value="An anticodon-binding domain of class I aminoacyl-tRNA synthetases"/>
    <property type="match status" value="1"/>
</dbReference>
<dbReference type="SUPFAM" id="SSF52374">
    <property type="entry name" value="Nucleotidylyl transferase"/>
    <property type="match status" value="1"/>
</dbReference>
<dbReference type="PROSITE" id="PS00178">
    <property type="entry name" value="AA_TRNA_LIGASE_I"/>
    <property type="match status" value="1"/>
</dbReference>
<gene>
    <name evidence="1" type="primary">gltX</name>
    <name type="ordered locus">Smal_1209</name>
</gene>
<sequence>MTCRTRFAPSPTGYLHIGGARTALYCWLEARHRGGEFVLRIEDTDRERSTQGAIDAILEAMEWLGLDYDEGPIYQTDRVARYLEVAEQLVADGKAYYAYETREELDAMREAAMAKQEKPRYNGAARELGLPRKDDPNRVIRFKNPLQGTVVFDDLIKGRIEIANSELDDMVIFRPDGFPTYNFAVVVDDWDMGITEVIRGDDHINNTPRQINLYEGIGAPVPKFGHMPMILDEQGAKLSKRTGAADVMQYKDAGYLPDALLSYLARLGWSHGDQELFSRQELIELFDVKDCNSKASRLDMAKLGWVNQHFLKTEDVAAIVPHLVYQLQKLGLDVAAGPAPEDVVIALRERVQTLKEMAEKAVVWYQPLTEYDEAAVAKHFKAGAEVALGKARELLAALPEWTAEAVGVALHDTAAALEMGMGKVAQPLRVAITGTQVSPDISHTVYLAGRDQALKRIDVAITKVATA</sequence>
<proteinExistence type="inferred from homology"/>
<feature type="chain" id="PRO_1000090110" description="Glutamate--tRNA ligase">
    <location>
        <begin position="1"/>
        <end position="467"/>
    </location>
</feature>
<feature type="short sequence motif" description="'HIGH' region" evidence="1">
    <location>
        <begin position="9"/>
        <end position="19"/>
    </location>
</feature>
<feature type="short sequence motif" description="'KMSKS' region" evidence="1">
    <location>
        <begin position="237"/>
        <end position="241"/>
    </location>
</feature>
<feature type="binding site" evidence="1">
    <location>
        <position position="240"/>
    </location>
    <ligand>
        <name>ATP</name>
        <dbReference type="ChEBI" id="CHEBI:30616"/>
    </ligand>
</feature>
<organism>
    <name type="scientific">Stenotrophomonas maltophilia (strain R551-3)</name>
    <dbReference type="NCBI Taxonomy" id="391008"/>
    <lineage>
        <taxon>Bacteria</taxon>
        <taxon>Pseudomonadati</taxon>
        <taxon>Pseudomonadota</taxon>
        <taxon>Gammaproteobacteria</taxon>
        <taxon>Lysobacterales</taxon>
        <taxon>Lysobacteraceae</taxon>
        <taxon>Stenotrophomonas</taxon>
        <taxon>Stenotrophomonas maltophilia group</taxon>
    </lineage>
</organism>
<evidence type="ECO:0000255" key="1">
    <source>
        <dbReference type="HAMAP-Rule" id="MF_00022"/>
    </source>
</evidence>
<accession>B4SPM7</accession>
<protein>
    <recommendedName>
        <fullName evidence="1">Glutamate--tRNA ligase</fullName>
        <ecNumber evidence="1">6.1.1.17</ecNumber>
    </recommendedName>
    <alternativeName>
        <fullName evidence="1">Glutamyl-tRNA synthetase</fullName>
        <shortName evidence="1">GluRS</shortName>
    </alternativeName>
</protein>
<keyword id="KW-0030">Aminoacyl-tRNA synthetase</keyword>
<keyword id="KW-0067">ATP-binding</keyword>
<keyword id="KW-0963">Cytoplasm</keyword>
<keyword id="KW-0436">Ligase</keyword>
<keyword id="KW-0547">Nucleotide-binding</keyword>
<keyword id="KW-0648">Protein biosynthesis</keyword>